<proteinExistence type="inferred from homology"/>
<accession>A7M922</accession>
<dbReference type="EC" id="3.4.21.92"/>
<dbReference type="EMBL" id="AM711639">
    <property type="protein sequence ID" value="CAM98350.1"/>
    <property type="molecule type" value="Genomic_DNA"/>
</dbReference>
<dbReference type="RefSeq" id="YP_001430063.1">
    <property type="nucleotide sequence ID" value="NC_009765.1"/>
</dbReference>
<dbReference type="SMR" id="A7M922"/>
<dbReference type="MEROPS" id="S14.002"/>
<dbReference type="GeneID" id="5536776"/>
<dbReference type="GO" id="GO:0009368">
    <property type="term" value="C:endopeptidase Clp complex"/>
    <property type="evidence" value="ECO:0007669"/>
    <property type="project" value="TreeGrafter"/>
</dbReference>
<dbReference type="GO" id="GO:0009532">
    <property type="term" value="C:plastid stroma"/>
    <property type="evidence" value="ECO:0007669"/>
    <property type="project" value="UniProtKB-ARBA"/>
</dbReference>
<dbReference type="GO" id="GO:0004176">
    <property type="term" value="F:ATP-dependent peptidase activity"/>
    <property type="evidence" value="ECO:0007669"/>
    <property type="project" value="InterPro"/>
</dbReference>
<dbReference type="GO" id="GO:0051117">
    <property type="term" value="F:ATPase binding"/>
    <property type="evidence" value="ECO:0007669"/>
    <property type="project" value="TreeGrafter"/>
</dbReference>
<dbReference type="GO" id="GO:0004252">
    <property type="term" value="F:serine-type endopeptidase activity"/>
    <property type="evidence" value="ECO:0007669"/>
    <property type="project" value="UniProtKB-UniRule"/>
</dbReference>
<dbReference type="GO" id="GO:0006515">
    <property type="term" value="P:protein quality control for misfolded or incompletely synthesized proteins"/>
    <property type="evidence" value="ECO:0007669"/>
    <property type="project" value="TreeGrafter"/>
</dbReference>
<dbReference type="CDD" id="cd07017">
    <property type="entry name" value="S14_ClpP_2"/>
    <property type="match status" value="1"/>
</dbReference>
<dbReference type="Gene3D" id="3.90.226.10">
    <property type="entry name" value="2-enoyl-CoA Hydratase, Chain A, domain 1"/>
    <property type="match status" value="1"/>
</dbReference>
<dbReference type="HAMAP" id="MF_00444">
    <property type="entry name" value="ClpP"/>
    <property type="match status" value="1"/>
</dbReference>
<dbReference type="InterPro" id="IPR001907">
    <property type="entry name" value="ClpP"/>
</dbReference>
<dbReference type="InterPro" id="IPR029045">
    <property type="entry name" value="ClpP/crotonase-like_dom_sf"/>
</dbReference>
<dbReference type="InterPro" id="IPR023562">
    <property type="entry name" value="ClpP/TepA"/>
</dbReference>
<dbReference type="InterPro" id="IPR033135">
    <property type="entry name" value="ClpP_His_AS"/>
</dbReference>
<dbReference type="PANTHER" id="PTHR10381">
    <property type="entry name" value="ATP-DEPENDENT CLP PROTEASE PROTEOLYTIC SUBUNIT"/>
    <property type="match status" value="1"/>
</dbReference>
<dbReference type="PANTHER" id="PTHR10381:SF15">
    <property type="entry name" value="CHLOROPLASTIC ATP-DEPENDENT CLP PROTEASE PROTEOLYTIC SUBUNIT 1"/>
    <property type="match status" value="1"/>
</dbReference>
<dbReference type="Pfam" id="PF00574">
    <property type="entry name" value="CLP_protease"/>
    <property type="match status" value="1"/>
</dbReference>
<dbReference type="PRINTS" id="PR00127">
    <property type="entry name" value="CLPPROTEASEP"/>
</dbReference>
<dbReference type="SUPFAM" id="SSF52096">
    <property type="entry name" value="ClpP/crotonase"/>
    <property type="match status" value="1"/>
</dbReference>
<dbReference type="PROSITE" id="PS00382">
    <property type="entry name" value="CLP_PROTEASE_HIS"/>
    <property type="match status" value="1"/>
</dbReference>
<geneLocation type="plastid"/>
<reference key="1">
    <citation type="journal article" date="2007" name="BMC Plant Biol.">
        <title>Complete DNA sequences of the plastid genomes of two parasitic flowering plant species, Cuscuta reflexa and Cuscuta gronovii.</title>
        <authorList>
            <person name="Funk H.T."/>
            <person name="Berg S."/>
            <person name="Krupinska K."/>
            <person name="Maier U.-G."/>
            <person name="Krause K."/>
        </authorList>
    </citation>
    <scope>NUCLEOTIDE SEQUENCE [LARGE SCALE GENOMIC DNA]</scope>
</reference>
<feature type="chain" id="PRO_0000309296" description="ATP-dependent Clp protease proteolytic subunit">
    <location>
        <begin position="1"/>
        <end position="198"/>
    </location>
</feature>
<feature type="active site" description="Nucleophile" evidence="1">
    <location>
        <position position="101"/>
    </location>
</feature>
<feature type="active site" evidence="1">
    <location>
        <position position="126"/>
    </location>
</feature>
<comment type="function">
    <text evidence="1">Cleaves peptides in various proteins in a process that requires ATP hydrolysis. Has a chymotrypsin-like activity. Plays a major role in the degradation of misfolded proteins (By similarity).</text>
</comment>
<comment type="catalytic activity">
    <reaction>
        <text>Hydrolysis of proteins to small peptides in the presence of ATP and magnesium. alpha-casein is the usual test substrate. In the absence of ATP, only oligopeptides shorter than five residues are hydrolyzed (such as succinyl-Leu-Tyr-|-NHMec, and Leu-Tyr-Leu-|-Tyr-Trp, in which cleavage of the -Tyr-|-Leu- and -Tyr-|-Trp bonds also occurs).</text>
        <dbReference type="EC" id="3.4.21.92"/>
    </reaction>
</comment>
<comment type="subunit">
    <text>Component of the plastid Clp protease core complex.</text>
</comment>
<comment type="subcellular location">
    <subcellularLocation>
        <location>Plastid</location>
    </subcellularLocation>
</comment>
<comment type="similarity">
    <text evidence="2">Belongs to the peptidase S14 family.</text>
</comment>
<comment type="caution">
    <text evidence="2">Young tissue from this organism is photosynthetic and contains some thylakoids, although the photosynthetic activity does not exceed the light compensation point.</text>
</comment>
<name>CLPP_CUSGR</name>
<gene>
    <name type="primary">clpP</name>
</gene>
<sequence>MPIGVPRVRFLYDEDTGQVWIDIYNRLYRERCLFLTHTINTKIGNQLAGLFIYLGIQDDPKDIFFFLNSPGGGIISGLAIYDSMQVVRPDTQTICVGLAASMACFLLVGGTITKRLAFPHARVMMHQPLSTFFETQTGDAVMEVDELLKMRENLIEVYAQRTGKPHWVISEDIERDVFLSPTEAKTYGLVDVVGVTLI</sequence>
<evidence type="ECO:0000250" key="1"/>
<evidence type="ECO:0000305" key="2"/>
<protein>
    <recommendedName>
        <fullName>ATP-dependent Clp protease proteolytic subunit</fullName>
        <ecNumber>3.4.21.92</ecNumber>
    </recommendedName>
    <alternativeName>
        <fullName>Endopeptidase Clp</fullName>
    </alternativeName>
</protein>
<keyword id="KW-0378">Hydrolase</keyword>
<keyword id="KW-0934">Plastid</keyword>
<keyword id="KW-0645">Protease</keyword>
<keyword id="KW-0720">Serine protease</keyword>
<organism>
    <name type="scientific">Cuscuta gronovii</name>
    <name type="common">Common dodder</name>
    <name type="synonym">Epithymum gronovii</name>
    <dbReference type="NCBI Taxonomy" id="35886"/>
    <lineage>
        <taxon>Eukaryota</taxon>
        <taxon>Viridiplantae</taxon>
        <taxon>Streptophyta</taxon>
        <taxon>Embryophyta</taxon>
        <taxon>Tracheophyta</taxon>
        <taxon>Spermatophyta</taxon>
        <taxon>Magnoliopsida</taxon>
        <taxon>eudicotyledons</taxon>
        <taxon>Gunneridae</taxon>
        <taxon>Pentapetalae</taxon>
        <taxon>asterids</taxon>
        <taxon>lamiids</taxon>
        <taxon>Solanales</taxon>
        <taxon>Convolvulaceae</taxon>
        <taxon>Cuscuteae</taxon>
        <taxon>Cuscuta</taxon>
        <taxon>Cuscuta subgen. Grammica</taxon>
        <taxon>Cuscuta sect. Oxycarpae</taxon>
    </lineage>
</organism>